<reference key="1">
    <citation type="journal article" date="1994" name="J. Bacteriol.">
        <title>Cloning and sequencing of the genes from Salmonella typhimurium encoding a new bacterial ribonucleotide reductase.</title>
        <authorList>
            <person name="Jordan A."/>
            <person name="Gibert I."/>
            <person name="Barbe J."/>
        </authorList>
    </citation>
    <scope>NUCLEOTIDE SEQUENCE [GENOMIC DNA]</scope>
    <source>
        <strain>LT2</strain>
    </source>
</reference>
<reference key="2">
    <citation type="journal article" date="2001" name="Nature">
        <title>Complete genome sequence of Salmonella enterica serovar Typhimurium LT2.</title>
        <authorList>
            <person name="McClelland M."/>
            <person name="Sanderson K.E."/>
            <person name="Spieth J."/>
            <person name="Clifton S.W."/>
            <person name="Latreille P."/>
            <person name="Courtney L."/>
            <person name="Porwollik S."/>
            <person name="Ali J."/>
            <person name="Dante M."/>
            <person name="Du F."/>
            <person name="Hou S."/>
            <person name="Layman D."/>
            <person name="Leonard S."/>
            <person name="Nguyen C."/>
            <person name="Scott K."/>
            <person name="Holmes A."/>
            <person name="Grewal N."/>
            <person name="Mulvaney E."/>
            <person name="Ryan E."/>
            <person name="Sun H."/>
            <person name="Florea L."/>
            <person name="Miller W."/>
            <person name="Stoneking T."/>
            <person name="Nhan M."/>
            <person name="Waterston R."/>
            <person name="Wilson R.K."/>
        </authorList>
    </citation>
    <scope>NUCLEOTIDE SEQUENCE [LARGE SCALE GENOMIC DNA]</scope>
    <source>
        <strain>LT2 / SGSC1412 / ATCC 700720</strain>
    </source>
</reference>
<reference key="3">
    <citation type="journal article" date="1989" name="Mol. Microbiol.">
        <title>Molecular characterization of the proU loci of Salmonella typhimurium and Escherichia coli encoding osmoregulated glycine betaine transport systems.</title>
        <authorList>
            <person name="Stirling D.A."/>
            <person name="Hulton C.S.J."/>
            <person name="Waddell L."/>
            <person name="Park S.F."/>
            <person name="Stewart G.S.A.B."/>
            <person name="Booth I.R."/>
            <person name="Higgins C.F."/>
        </authorList>
    </citation>
    <scope>NUCLEOTIDE SEQUENCE [GENOMIC DNA] OF 219-319</scope>
    <source>
        <strain>LT2</strain>
    </source>
</reference>
<reference key="4">
    <citation type="journal article" date="1989" name="J. Bacteriol.">
        <title>Nucleotide sequence of the transcriptional control region of the osmotically regulated proU operon of Salmonella typhimurium and identification of the 5' endpoint of the proU mRNA.</title>
        <authorList>
            <person name="Overdier D.G."/>
            <person name="Olson E.R."/>
            <person name="Erickson B.D."/>
            <person name="Ederer M.M."/>
            <person name="Csonka L.N."/>
        </authorList>
    </citation>
    <scope>NUCLEOTIDE SEQUENCE [GENOMIC DNA] OF 219-319</scope>
</reference>
<reference key="5">
    <citation type="journal article" date="1998" name="Biochemistry">
        <title>Structure of Salmonella typhimurium nrdF ribonucleotide reductase in its oxidized and reduced forms.</title>
        <authorList>
            <person name="Eriksson M."/>
            <person name="Jordan A."/>
            <person name="Eklund H."/>
        </authorList>
    </citation>
    <scope>X-RAY CRYSTALLOGRAPHY (2.1 ANGSTROMS)</scope>
</reference>
<keyword id="KW-0002">3D-structure</keyword>
<keyword id="KW-0215">Deoxyribonucleotide synthesis</keyword>
<keyword id="KW-0408">Iron</keyword>
<keyword id="KW-0479">Metal-binding</keyword>
<keyword id="KW-0560">Oxidoreductase</keyword>
<keyword id="KW-1185">Reference proteome</keyword>
<gene>
    <name type="primary">nrdF</name>
    <name type="ordered locus">STM2808</name>
</gene>
<feature type="chain" id="PRO_0000190489" description="Ribonucleoside-diphosphate reductase 2 subunit beta">
    <location>
        <begin position="1"/>
        <end position="319"/>
    </location>
</feature>
<feature type="active site" evidence="2">
    <location>
        <position position="105"/>
    </location>
</feature>
<feature type="binding site">
    <location>
        <position position="67"/>
    </location>
    <ligand>
        <name>Fe cation</name>
        <dbReference type="ChEBI" id="CHEBI:24875"/>
        <label>1</label>
    </ligand>
</feature>
<feature type="binding site">
    <location>
        <position position="98"/>
    </location>
    <ligand>
        <name>Fe cation</name>
        <dbReference type="ChEBI" id="CHEBI:24875"/>
        <label>1</label>
    </ligand>
</feature>
<feature type="binding site">
    <location>
        <position position="98"/>
    </location>
    <ligand>
        <name>Fe cation</name>
        <dbReference type="ChEBI" id="CHEBI:24875"/>
        <label>2</label>
    </ligand>
</feature>
<feature type="binding site">
    <location>
        <position position="101"/>
    </location>
    <ligand>
        <name>Fe cation</name>
        <dbReference type="ChEBI" id="CHEBI:24875"/>
        <label>1</label>
    </ligand>
</feature>
<feature type="binding site">
    <location>
        <position position="158"/>
    </location>
    <ligand>
        <name>Fe cation</name>
        <dbReference type="ChEBI" id="CHEBI:24875"/>
        <label>2</label>
    </ligand>
</feature>
<feature type="binding site">
    <location>
        <position position="192"/>
    </location>
    <ligand>
        <name>Fe cation</name>
        <dbReference type="ChEBI" id="CHEBI:24875"/>
        <label>2</label>
    </ligand>
</feature>
<feature type="binding site">
    <location>
        <position position="195"/>
    </location>
    <ligand>
        <name>Fe cation</name>
        <dbReference type="ChEBI" id="CHEBI:24875"/>
        <label>2</label>
    </ligand>
</feature>
<feature type="sequence conflict" description="In Ref. 4; AAA88620." evidence="3" ref="4">
    <original>L</original>
    <variation>V</variation>
    <location>
        <position position="286"/>
    </location>
</feature>
<feature type="helix" evidence="4">
    <location>
        <begin position="17"/>
        <end position="28"/>
    </location>
</feature>
<feature type="helix" evidence="4">
    <location>
        <begin position="33"/>
        <end position="35"/>
    </location>
</feature>
<feature type="helix" evidence="4">
    <location>
        <begin position="38"/>
        <end position="41"/>
    </location>
</feature>
<feature type="helix" evidence="4">
    <location>
        <begin position="42"/>
        <end position="46"/>
    </location>
</feature>
<feature type="helix" evidence="4">
    <location>
        <begin position="50"/>
        <end position="72"/>
    </location>
</feature>
<feature type="helix" evidence="4">
    <location>
        <begin position="74"/>
        <end position="79"/>
    </location>
</feature>
<feature type="helix" evidence="4">
    <location>
        <begin position="85"/>
        <end position="112"/>
    </location>
</feature>
<feature type="helix" evidence="4">
    <location>
        <begin position="115"/>
        <end position="127"/>
    </location>
</feature>
<feature type="helix" evidence="4">
    <location>
        <begin position="129"/>
        <end position="143"/>
    </location>
</feature>
<feature type="helix" evidence="4">
    <location>
        <begin position="147"/>
        <end position="159"/>
    </location>
</feature>
<feature type="turn" evidence="4">
    <location>
        <begin position="160"/>
        <end position="162"/>
    </location>
</feature>
<feature type="helix" evidence="4">
    <location>
        <begin position="163"/>
        <end position="174"/>
    </location>
</feature>
<feature type="helix" evidence="4">
    <location>
        <begin position="179"/>
        <end position="208"/>
    </location>
</feature>
<feature type="helix" evidence="4">
    <location>
        <begin position="212"/>
        <end position="240"/>
    </location>
</feature>
<feature type="turn" evidence="4">
    <location>
        <begin position="241"/>
        <end position="244"/>
    </location>
</feature>
<feature type="helix" evidence="4">
    <location>
        <begin position="247"/>
        <end position="264"/>
    </location>
</feature>
<feature type="turn" evidence="4">
    <location>
        <begin position="273"/>
        <end position="275"/>
    </location>
</feature>
<feature type="helix" evidence="4">
    <location>
        <begin position="280"/>
        <end position="286"/>
    </location>
</feature>
<comment type="function">
    <text>Provides the precursors necessary for DNA synthesis. Catalyzes the biosynthesis of deoxyribonucleotides from the corresponding ribonucleotides. R2F contains the tyrosyl radical required for catalysis.</text>
</comment>
<comment type="catalytic activity">
    <reaction evidence="2">
        <text>a 2'-deoxyribonucleoside 5'-diphosphate + [thioredoxin]-disulfide + H2O = a ribonucleoside 5'-diphosphate + [thioredoxin]-dithiol</text>
        <dbReference type="Rhea" id="RHEA:23252"/>
        <dbReference type="Rhea" id="RHEA-COMP:10698"/>
        <dbReference type="Rhea" id="RHEA-COMP:10700"/>
        <dbReference type="ChEBI" id="CHEBI:15377"/>
        <dbReference type="ChEBI" id="CHEBI:29950"/>
        <dbReference type="ChEBI" id="CHEBI:50058"/>
        <dbReference type="ChEBI" id="CHEBI:57930"/>
        <dbReference type="ChEBI" id="CHEBI:73316"/>
        <dbReference type="EC" id="1.17.4.1"/>
    </reaction>
</comment>
<comment type="cofactor">
    <cofactor>
        <name>Fe cation</name>
        <dbReference type="ChEBI" id="CHEBI:24875"/>
    </cofactor>
    <text>Binds 2 iron ions per subunit.</text>
</comment>
<comment type="subunit">
    <text evidence="1">Tetramer of two alpha and two beta subunits.</text>
</comment>
<comment type="similarity">
    <text evidence="3">Belongs to the ribonucleoside diphosphate reductase small chain family.</text>
</comment>
<name>RIR4_SALTY</name>
<evidence type="ECO:0000250" key="1"/>
<evidence type="ECO:0000255" key="2">
    <source>
        <dbReference type="PROSITE-ProRule" id="PRU10014"/>
    </source>
</evidence>
<evidence type="ECO:0000305" key="3"/>
<evidence type="ECO:0007829" key="4">
    <source>
        <dbReference type="PDB" id="1R2F"/>
    </source>
</evidence>
<sequence length="319" mass="36232">MKLSRISAINWNKIQDDKDLEVWNRLTSNFWLPEKVPLSNDIPAWQTLSAAEQQLTIRVFTGLTLLDTIQNIAGAPSLMADAITPHEEAVLSNISFMEAVHARSYSSIFSTLCQTKEVDAAYAWSEENPPLQRKAQIILAHYVSDEPLKKKIASVFLESFLFYSGFWLPMYFSSRGKLTNTADLIRLIIRDEAVHGYYIGYKYQIALQKLSAIEREELKLFALDLLMELYDNEIRYTEALYAETGWVNDVKAFLCYNANKALMNLGYEALFPPEMADVNPAILAALSPNADENHDFFSGSGSSYVMGKTVETEDEDWNF</sequence>
<dbReference type="EC" id="1.17.4.1"/>
<dbReference type="EMBL" id="X73226">
    <property type="protein sequence ID" value="CAA51695.1"/>
    <property type="molecule type" value="Genomic_DNA"/>
</dbReference>
<dbReference type="EMBL" id="AE006468">
    <property type="protein sequence ID" value="AAL21693.1"/>
    <property type="molecule type" value="Genomic_DNA"/>
</dbReference>
<dbReference type="EMBL" id="X52693">
    <property type="protein sequence ID" value="CAA36920.1"/>
    <property type="molecule type" value="Genomic_DNA"/>
</dbReference>
<dbReference type="EMBL" id="M26063">
    <property type="protein sequence ID" value="AAA88620.1"/>
    <property type="molecule type" value="Genomic_DNA"/>
</dbReference>
<dbReference type="PIR" id="S34272">
    <property type="entry name" value="S34272"/>
</dbReference>
<dbReference type="RefSeq" id="NP_461734.1">
    <property type="nucleotide sequence ID" value="NC_003197.2"/>
</dbReference>
<dbReference type="RefSeq" id="WP_000777903.1">
    <property type="nucleotide sequence ID" value="NC_003197.2"/>
</dbReference>
<dbReference type="PDB" id="1R2F">
    <property type="method" value="X-ray"/>
    <property type="resolution" value="2.10 A"/>
    <property type="chains" value="A/B=1-319"/>
</dbReference>
<dbReference type="PDB" id="2BQ1">
    <property type="method" value="X-ray"/>
    <property type="resolution" value="4.00 A"/>
    <property type="chains" value="I/J=1-319"/>
</dbReference>
<dbReference type="PDB" id="2R2F">
    <property type="method" value="X-ray"/>
    <property type="resolution" value="2.25 A"/>
    <property type="chains" value="A/B=1-319"/>
</dbReference>
<dbReference type="PDBsum" id="1R2F"/>
<dbReference type="PDBsum" id="2BQ1"/>
<dbReference type="PDBsum" id="2R2F"/>
<dbReference type="SMR" id="P17424"/>
<dbReference type="STRING" id="99287.STM2808"/>
<dbReference type="PaxDb" id="99287-STM2808"/>
<dbReference type="GeneID" id="1254331"/>
<dbReference type="KEGG" id="stm:STM2808"/>
<dbReference type="PATRIC" id="fig|99287.12.peg.2966"/>
<dbReference type="HOGENOM" id="CLU_052495_0_0_6"/>
<dbReference type="OMA" id="LGYEAMF"/>
<dbReference type="PhylomeDB" id="P17424"/>
<dbReference type="BioCyc" id="MetaCyc:MONOMER-13836"/>
<dbReference type="BioCyc" id="SENT99287:STM2808-MONOMER"/>
<dbReference type="EvolutionaryTrace" id="P17424"/>
<dbReference type="Proteomes" id="UP000001014">
    <property type="component" value="Chromosome"/>
</dbReference>
<dbReference type="GO" id="GO:0005971">
    <property type="term" value="C:ribonucleoside-diphosphate reductase complex"/>
    <property type="evidence" value="ECO:0007669"/>
    <property type="project" value="InterPro"/>
</dbReference>
<dbReference type="GO" id="GO:0046872">
    <property type="term" value="F:metal ion binding"/>
    <property type="evidence" value="ECO:0007669"/>
    <property type="project" value="UniProtKB-KW"/>
</dbReference>
<dbReference type="GO" id="GO:0004748">
    <property type="term" value="F:ribonucleoside-diphosphate reductase activity, thioredoxin disulfide as acceptor"/>
    <property type="evidence" value="ECO:0007669"/>
    <property type="project" value="UniProtKB-EC"/>
</dbReference>
<dbReference type="GO" id="GO:0009263">
    <property type="term" value="P:deoxyribonucleotide biosynthetic process"/>
    <property type="evidence" value="ECO:0007669"/>
    <property type="project" value="UniProtKB-KW"/>
</dbReference>
<dbReference type="CDD" id="cd01049">
    <property type="entry name" value="RNRR2"/>
    <property type="match status" value="1"/>
</dbReference>
<dbReference type="Gene3D" id="1.10.620.20">
    <property type="entry name" value="Ribonucleotide Reductase, subunit A"/>
    <property type="match status" value="1"/>
</dbReference>
<dbReference type="InterPro" id="IPR009078">
    <property type="entry name" value="Ferritin-like_SF"/>
</dbReference>
<dbReference type="InterPro" id="IPR012348">
    <property type="entry name" value="RNR-like"/>
</dbReference>
<dbReference type="InterPro" id="IPR026494">
    <property type="entry name" value="RNR_NrdF-like"/>
</dbReference>
<dbReference type="InterPro" id="IPR033909">
    <property type="entry name" value="RNR_small"/>
</dbReference>
<dbReference type="InterPro" id="IPR030475">
    <property type="entry name" value="RNR_small_AS"/>
</dbReference>
<dbReference type="InterPro" id="IPR000358">
    <property type="entry name" value="RNR_small_fam"/>
</dbReference>
<dbReference type="NCBIfam" id="NF007182">
    <property type="entry name" value="PRK09614.1-1"/>
    <property type="match status" value="1"/>
</dbReference>
<dbReference type="NCBIfam" id="NF007183">
    <property type="entry name" value="PRK09614.1-2"/>
    <property type="match status" value="1"/>
</dbReference>
<dbReference type="NCBIfam" id="NF010572">
    <property type="entry name" value="PRK13965.1"/>
    <property type="match status" value="1"/>
</dbReference>
<dbReference type="NCBIfam" id="TIGR04171">
    <property type="entry name" value="RNR_1b_NrdF"/>
    <property type="match status" value="1"/>
</dbReference>
<dbReference type="PANTHER" id="PTHR23409">
    <property type="entry name" value="RIBONUCLEOSIDE-DIPHOSPHATE REDUCTASE SMALL CHAIN"/>
    <property type="match status" value="1"/>
</dbReference>
<dbReference type="PANTHER" id="PTHR23409:SF18">
    <property type="entry name" value="RIBONUCLEOSIDE-DIPHOSPHATE REDUCTASE SUBUNIT M2"/>
    <property type="match status" value="1"/>
</dbReference>
<dbReference type="Pfam" id="PF00268">
    <property type="entry name" value="Ribonuc_red_sm"/>
    <property type="match status" value="1"/>
</dbReference>
<dbReference type="PIRSF" id="PIRSF000355">
    <property type="entry name" value="NrdB"/>
    <property type="match status" value="1"/>
</dbReference>
<dbReference type="SUPFAM" id="SSF47240">
    <property type="entry name" value="Ferritin-like"/>
    <property type="match status" value="1"/>
</dbReference>
<dbReference type="PROSITE" id="PS00368">
    <property type="entry name" value="RIBORED_SMALL"/>
    <property type="match status" value="1"/>
</dbReference>
<accession>P17424</accession>
<proteinExistence type="evidence at protein level"/>
<organism>
    <name type="scientific">Salmonella typhimurium (strain LT2 / SGSC1412 / ATCC 700720)</name>
    <dbReference type="NCBI Taxonomy" id="99287"/>
    <lineage>
        <taxon>Bacteria</taxon>
        <taxon>Pseudomonadati</taxon>
        <taxon>Pseudomonadota</taxon>
        <taxon>Gammaproteobacteria</taxon>
        <taxon>Enterobacterales</taxon>
        <taxon>Enterobacteriaceae</taxon>
        <taxon>Salmonella</taxon>
    </lineage>
</organism>
<protein>
    <recommendedName>
        <fullName>Ribonucleoside-diphosphate reductase 2 subunit beta</fullName>
        <ecNumber>1.17.4.1</ecNumber>
    </recommendedName>
    <alternativeName>
        <fullName>R2F protein</fullName>
    </alternativeName>
    <alternativeName>
        <fullName>Ribonucleotide reductase 2</fullName>
    </alternativeName>
</protein>